<reference key="1">
    <citation type="journal article" date="2010" name="Genome Biol. Evol.">
        <title>Continuing evolution of Burkholderia mallei through genome reduction and large-scale rearrangements.</title>
        <authorList>
            <person name="Losada L."/>
            <person name="Ronning C.M."/>
            <person name="DeShazer D."/>
            <person name="Woods D."/>
            <person name="Fedorova N."/>
            <person name="Kim H.S."/>
            <person name="Shabalina S.A."/>
            <person name="Pearson T.R."/>
            <person name="Brinkac L."/>
            <person name="Tan P."/>
            <person name="Nandi T."/>
            <person name="Crabtree J."/>
            <person name="Badger J."/>
            <person name="Beckstrom-Sternberg S."/>
            <person name="Saqib M."/>
            <person name="Schutzer S.E."/>
            <person name="Keim P."/>
            <person name="Nierman W.C."/>
        </authorList>
    </citation>
    <scope>NUCLEOTIDE SEQUENCE [LARGE SCALE GENOMIC DNA]</scope>
    <source>
        <strain>1710b</strain>
    </source>
</reference>
<comment type="catalytic activity">
    <reaction evidence="1">
        <text>tRNA(His) + L-histidine + ATP = L-histidyl-tRNA(His) + AMP + diphosphate + H(+)</text>
        <dbReference type="Rhea" id="RHEA:17313"/>
        <dbReference type="Rhea" id="RHEA-COMP:9665"/>
        <dbReference type="Rhea" id="RHEA-COMP:9689"/>
        <dbReference type="ChEBI" id="CHEBI:15378"/>
        <dbReference type="ChEBI" id="CHEBI:30616"/>
        <dbReference type="ChEBI" id="CHEBI:33019"/>
        <dbReference type="ChEBI" id="CHEBI:57595"/>
        <dbReference type="ChEBI" id="CHEBI:78442"/>
        <dbReference type="ChEBI" id="CHEBI:78527"/>
        <dbReference type="ChEBI" id="CHEBI:456215"/>
        <dbReference type="EC" id="6.1.1.21"/>
    </reaction>
</comment>
<comment type="subunit">
    <text evidence="1">Homodimer.</text>
</comment>
<comment type="subcellular location">
    <subcellularLocation>
        <location evidence="1">Cytoplasm</location>
    </subcellularLocation>
</comment>
<comment type="similarity">
    <text evidence="1">Belongs to the class-II aminoacyl-tRNA synthetase family.</text>
</comment>
<keyword id="KW-0030">Aminoacyl-tRNA synthetase</keyword>
<keyword id="KW-0067">ATP-binding</keyword>
<keyword id="KW-0963">Cytoplasm</keyword>
<keyword id="KW-0436">Ligase</keyword>
<keyword id="KW-0547">Nucleotide-binding</keyword>
<keyword id="KW-0648">Protein biosynthesis</keyword>
<organism>
    <name type="scientific">Burkholderia pseudomallei (strain 1710b)</name>
    <dbReference type="NCBI Taxonomy" id="320372"/>
    <lineage>
        <taxon>Bacteria</taxon>
        <taxon>Pseudomonadati</taxon>
        <taxon>Pseudomonadota</taxon>
        <taxon>Betaproteobacteria</taxon>
        <taxon>Burkholderiales</taxon>
        <taxon>Burkholderiaceae</taxon>
        <taxon>Burkholderia</taxon>
        <taxon>pseudomallei group</taxon>
    </lineage>
</organism>
<evidence type="ECO:0000255" key="1">
    <source>
        <dbReference type="HAMAP-Rule" id="MF_00127"/>
    </source>
</evidence>
<name>SYH_BURP1</name>
<feature type="chain" id="PRO_1000016326" description="Histidine--tRNA ligase">
    <location>
        <begin position="1"/>
        <end position="446"/>
    </location>
</feature>
<sequence length="446" mass="49600">MTEQKRKLEKLTGVKGMNDILPQDAGLWEFFEATVKSLLRAYGYQNIRTPIVEHTQLFTRGIGEVTDIVEKEMYSFVDALNGENLTLRPENTAAVVRAAIEHNMLYDGPKRLWYLGPMFRHERPQRGRYRQFHQVGVEALGFAGPDADAEIIMMCQRLWDDLGLTGIKLEINSLGLAEERAAHRVELIKYLEQHVDKLDDDAQRRLYTNPLRVLDTKNPALQEIVRNAPQLIDFLGDVSRAHFDGLQQLLKANNLPFTINPRLVRGLDYYNLTVFEWVTDKLGAQGTVAAGGRYDPLIEQLGGKPTAACGWAMGVERILELLKEEHLVPEQEGVDVYVVHQGDAAREQAFIVAERLRDTGLDVILHCSADGAGASFKSQMKRADASGAAFAVIFGEDEVANGTVSVKPLRGTGAEGEKNVQQSVPVESLTEFLINAMVATAEDGDD</sequence>
<accession>Q3JRQ5</accession>
<gene>
    <name evidence="1" type="primary">hisS</name>
    <name type="ordered locus">BURPS1710b_2353</name>
</gene>
<protein>
    <recommendedName>
        <fullName evidence="1">Histidine--tRNA ligase</fullName>
        <ecNumber evidence="1">6.1.1.21</ecNumber>
    </recommendedName>
    <alternativeName>
        <fullName evidence="1">Histidyl-tRNA synthetase</fullName>
        <shortName evidence="1">HisRS</shortName>
    </alternativeName>
</protein>
<proteinExistence type="inferred from homology"/>
<dbReference type="EC" id="6.1.1.21" evidence="1"/>
<dbReference type="EMBL" id="CP000124">
    <property type="protein sequence ID" value="ABA50568.1"/>
    <property type="molecule type" value="Genomic_DNA"/>
</dbReference>
<dbReference type="RefSeq" id="WP_004191559.1">
    <property type="nucleotide sequence ID" value="NC_007434.1"/>
</dbReference>
<dbReference type="SMR" id="Q3JRQ5"/>
<dbReference type="EnsemblBacteria" id="ABA50568">
    <property type="protein sequence ID" value="ABA50568"/>
    <property type="gene ID" value="BURPS1710b_2353"/>
</dbReference>
<dbReference type="GeneID" id="92979077"/>
<dbReference type="KEGG" id="bpm:BURPS1710b_2353"/>
<dbReference type="HOGENOM" id="CLU_025113_1_1_4"/>
<dbReference type="Proteomes" id="UP000002700">
    <property type="component" value="Chromosome I"/>
</dbReference>
<dbReference type="GO" id="GO:0005737">
    <property type="term" value="C:cytoplasm"/>
    <property type="evidence" value="ECO:0007669"/>
    <property type="project" value="UniProtKB-SubCell"/>
</dbReference>
<dbReference type="GO" id="GO:0005524">
    <property type="term" value="F:ATP binding"/>
    <property type="evidence" value="ECO:0007669"/>
    <property type="project" value="UniProtKB-UniRule"/>
</dbReference>
<dbReference type="GO" id="GO:0004821">
    <property type="term" value="F:histidine-tRNA ligase activity"/>
    <property type="evidence" value="ECO:0007669"/>
    <property type="project" value="UniProtKB-UniRule"/>
</dbReference>
<dbReference type="GO" id="GO:0006427">
    <property type="term" value="P:histidyl-tRNA aminoacylation"/>
    <property type="evidence" value="ECO:0007669"/>
    <property type="project" value="UniProtKB-UniRule"/>
</dbReference>
<dbReference type="CDD" id="cd00773">
    <property type="entry name" value="HisRS-like_core"/>
    <property type="match status" value="1"/>
</dbReference>
<dbReference type="CDD" id="cd00859">
    <property type="entry name" value="HisRS_anticodon"/>
    <property type="match status" value="1"/>
</dbReference>
<dbReference type="FunFam" id="3.30.930.10:FF:000005">
    <property type="entry name" value="Histidine--tRNA ligase"/>
    <property type="match status" value="1"/>
</dbReference>
<dbReference type="Gene3D" id="3.40.50.800">
    <property type="entry name" value="Anticodon-binding domain"/>
    <property type="match status" value="1"/>
</dbReference>
<dbReference type="Gene3D" id="3.30.930.10">
    <property type="entry name" value="Bira Bifunctional Protein, Domain 2"/>
    <property type="match status" value="1"/>
</dbReference>
<dbReference type="HAMAP" id="MF_00127">
    <property type="entry name" value="His_tRNA_synth"/>
    <property type="match status" value="1"/>
</dbReference>
<dbReference type="InterPro" id="IPR006195">
    <property type="entry name" value="aa-tRNA-synth_II"/>
</dbReference>
<dbReference type="InterPro" id="IPR045864">
    <property type="entry name" value="aa-tRNA-synth_II/BPL/LPL"/>
</dbReference>
<dbReference type="InterPro" id="IPR004154">
    <property type="entry name" value="Anticodon-bd"/>
</dbReference>
<dbReference type="InterPro" id="IPR036621">
    <property type="entry name" value="Anticodon-bd_dom_sf"/>
</dbReference>
<dbReference type="InterPro" id="IPR015807">
    <property type="entry name" value="His-tRNA-ligase"/>
</dbReference>
<dbReference type="InterPro" id="IPR041715">
    <property type="entry name" value="HisRS-like_core"/>
</dbReference>
<dbReference type="InterPro" id="IPR004516">
    <property type="entry name" value="HisRS/HisZ"/>
</dbReference>
<dbReference type="InterPro" id="IPR033656">
    <property type="entry name" value="HisRS_anticodon"/>
</dbReference>
<dbReference type="NCBIfam" id="TIGR00442">
    <property type="entry name" value="hisS"/>
    <property type="match status" value="1"/>
</dbReference>
<dbReference type="PANTHER" id="PTHR43707:SF1">
    <property type="entry name" value="HISTIDINE--TRNA LIGASE, MITOCHONDRIAL-RELATED"/>
    <property type="match status" value="1"/>
</dbReference>
<dbReference type="PANTHER" id="PTHR43707">
    <property type="entry name" value="HISTIDYL-TRNA SYNTHETASE"/>
    <property type="match status" value="1"/>
</dbReference>
<dbReference type="Pfam" id="PF03129">
    <property type="entry name" value="HGTP_anticodon"/>
    <property type="match status" value="1"/>
</dbReference>
<dbReference type="Pfam" id="PF13393">
    <property type="entry name" value="tRNA-synt_His"/>
    <property type="match status" value="1"/>
</dbReference>
<dbReference type="PIRSF" id="PIRSF001549">
    <property type="entry name" value="His-tRNA_synth"/>
    <property type="match status" value="1"/>
</dbReference>
<dbReference type="SUPFAM" id="SSF52954">
    <property type="entry name" value="Class II aaRS ABD-related"/>
    <property type="match status" value="1"/>
</dbReference>
<dbReference type="SUPFAM" id="SSF55681">
    <property type="entry name" value="Class II aaRS and biotin synthetases"/>
    <property type="match status" value="1"/>
</dbReference>
<dbReference type="PROSITE" id="PS50862">
    <property type="entry name" value="AA_TRNA_LIGASE_II"/>
    <property type="match status" value="1"/>
</dbReference>